<feature type="chain" id="PRO_0000379239" description="ATP-dependent helicase/nuclease subunit A">
    <location>
        <begin position="1"/>
        <end position="1241"/>
    </location>
</feature>
<feature type="domain" description="UvrD-like helicase ATP-binding" evidence="1">
    <location>
        <begin position="12"/>
        <end position="485"/>
    </location>
</feature>
<feature type="domain" description="UvrD-like helicase C-terminal" evidence="1">
    <location>
        <begin position="505"/>
        <end position="805"/>
    </location>
</feature>
<feature type="binding site" evidence="1">
    <location>
        <begin position="33"/>
        <end position="40"/>
    </location>
    <ligand>
        <name>ATP</name>
        <dbReference type="ChEBI" id="CHEBI:30616"/>
    </ligand>
</feature>
<keyword id="KW-0067">ATP-binding</keyword>
<keyword id="KW-0227">DNA damage</keyword>
<keyword id="KW-0234">DNA repair</keyword>
<keyword id="KW-0238">DNA-binding</keyword>
<keyword id="KW-0269">Exonuclease</keyword>
<keyword id="KW-0347">Helicase</keyword>
<keyword id="KW-0378">Hydrolase</keyword>
<keyword id="KW-0413">Isomerase</keyword>
<keyword id="KW-0540">Nuclease</keyword>
<keyword id="KW-0547">Nucleotide-binding</keyword>
<gene>
    <name evidence="1" type="primary">addA</name>
    <name type="ordered locus">BCE33L1039</name>
</gene>
<reference key="1">
    <citation type="journal article" date="2006" name="J. Bacteriol.">
        <title>Pathogenomic sequence analysis of Bacillus cereus and Bacillus thuringiensis isolates closely related to Bacillus anthracis.</title>
        <authorList>
            <person name="Han C.S."/>
            <person name="Xie G."/>
            <person name="Challacombe J.F."/>
            <person name="Altherr M.R."/>
            <person name="Bhotika S.S."/>
            <person name="Bruce D."/>
            <person name="Campbell C.S."/>
            <person name="Campbell M.L."/>
            <person name="Chen J."/>
            <person name="Chertkov O."/>
            <person name="Cleland C."/>
            <person name="Dimitrijevic M."/>
            <person name="Doggett N.A."/>
            <person name="Fawcett J.J."/>
            <person name="Glavina T."/>
            <person name="Goodwin L.A."/>
            <person name="Hill K.K."/>
            <person name="Hitchcock P."/>
            <person name="Jackson P.J."/>
            <person name="Keim P."/>
            <person name="Kewalramani A.R."/>
            <person name="Longmire J."/>
            <person name="Lucas S."/>
            <person name="Malfatti S."/>
            <person name="McMurry K."/>
            <person name="Meincke L.J."/>
            <person name="Misra M."/>
            <person name="Moseman B.L."/>
            <person name="Mundt M."/>
            <person name="Munk A.C."/>
            <person name="Okinaka R.T."/>
            <person name="Parson-Quintana B."/>
            <person name="Reilly L.P."/>
            <person name="Richardson P."/>
            <person name="Robinson D.L."/>
            <person name="Rubin E."/>
            <person name="Saunders E."/>
            <person name="Tapia R."/>
            <person name="Tesmer J.G."/>
            <person name="Thayer N."/>
            <person name="Thompson L.S."/>
            <person name="Tice H."/>
            <person name="Ticknor L.O."/>
            <person name="Wills P.L."/>
            <person name="Brettin T.S."/>
            <person name="Gilna P."/>
        </authorList>
    </citation>
    <scope>NUCLEOTIDE SEQUENCE [LARGE SCALE GENOMIC DNA]</scope>
    <source>
        <strain>ZK / E33L</strain>
    </source>
</reference>
<proteinExistence type="inferred from homology"/>
<dbReference type="EC" id="3.1.-.-" evidence="1"/>
<dbReference type="EC" id="5.6.2.4" evidence="1"/>
<dbReference type="EMBL" id="CP000001">
    <property type="protein sequence ID" value="AAU19207.1"/>
    <property type="molecule type" value="Genomic_DNA"/>
</dbReference>
<dbReference type="RefSeq" id="WP_000970457.1">
    <property type="nucleotide sequence ID" value="NC_006274.1"/>
</dbReference>
<dbReference type="SMR" id="Q63EM2"/>
<dbReference type="KEGG" id="bcz:BCE33L1039"/>
<dbReference type="PATRIC" id="fig|288681.22.peg.4527"/>
<dbReference type="Proteomes" id="UP000002612">
    <property type="component" value="Chromosome"/>
</dbReference>
<dbReference type="GO" id="GO:0005829">
    <property type="term" value="C:cytosol"/>
    <property type="evidence" value="ECO:0007669"/>
    <property type="project" value="TreeGrafter"/>
</dbReference>
<dbReference type="GO" id="GO:0033202">
    <property type="term" value="C:DNA helicase complex"/>
    <property type="evidence" value="ECO:0007669"/>
    <property type="project" value="TreeGrafter"/>
</dbReference>
<dbReference type="GO" id="GO:0043138">
    <property type="term" value="F:3'-5' DNA helicase activity"/>
    <property type="evidence" value="ECO:0007669"/>
    <property type="project" value="UniProtKB-UniRule"/>
</dbReference>
<dbReference type="GO" id="GO:0008408">
    <property type="term" value="F:3'-5' exonuclease activity"/>
    <property type="evidence" value="ECO:0007669"/>
    <property type="project" value="UniProtKB-UniRule"/>
</dbReference>
<dbReference type="GO" id="GO:0005524">
    <property type="term" value="F:ATP binding"/>
    <property type="evidence" value="ECO:0007669"/>
    <property type="project" value="UniProtKB-UniRule"/>
</dbReference>
<dbReference type="GO" id="GO:0016887">
    <property type="term" value="F:ATP hydrolysis activity"/>
    <property type="evidence" value="ECO:0007669"/>
    <property type="project" value="RHEA"/>
</dbReference>
<dbReference type="GO" id="GO:0003690">
    <property type="term" value="F:double-stranded DNA binding"/>
    <property type="evidence" value="ECO:0007669"/>
    <property type="project" value="UniProtKB-UniRule"/>
</dbReference>
<dbReference type="GO" id="GO:0000724">
    <property type="term" value="P:double-strand break repair via homologous recombination"/>
    <property type="evidence" value="ECO:0007669"/>
    <property type="project" value="UniProtKB-UniRule"/>
</dbReference>
<dbReference type="CDD" id="cd18807">
    <property type="entry name" value="SF1_C_UvrD"/>
    <property type="match status" value="1"/>
</dbReference>
<dbReference type="FunFam" id="3.40.50.300:FF:001164">
    <property type="entry name" value="ATP-dependent helicase/nuclease subunit A"/>
    <property type="match status" value="1"/>
</dbReference>
<dbReference type="FunFam" id="3.40.50.300:FF:001187">
    <property type="entry name" value="ATP-dependent helicase/nuclease subunit A"/>
    <property type="match status" value="1"/>
</dbReference>
<dbReference type="FunFam" id="3.40.50.300:FF:001196">
    <property type="entry name" value="ATP-dependent helicase/nuclease subunit A"/>
    <property type="match status" value="1"/>
</dbReference>
<dbReference type="FunFam" id="3.40.50.300:FF:001236">
    <property type="entry name" value="ATP-dependent helicase/nuclease subunit A"/>
    <property type="match status" value="1"/>
</dbReference>
<dbReference type="Gene3D" id="3.90.320.10">
    <property type="match status" value="1"/>
</dbReference>
<dbReference type="Gene3D" id="6.10.250.2380">
    <property type="match status" value="1"/>
</dbReference>
<dbReference type="Gene3D" id="3.40.50.300">
    <property type="entry name" value="P-loop containing nucleotide triphosphate hydrolases"/>
    <property type="match status" value="4"/>
</dbReference>
<dbReference type="HAMAP" id="MF_01451">
    <property type="entry name" value="AddA"/>
    <property type="match status" value="1"/>
</dbReference>
<dbReference type="InterPro" id="IPR014152">
    <property type="entry name" value="AddA"/>
</dbReference>
<dbReference type="InterPro" id="IPR014017">
    <property type="entry name" value="DNA_helicase_UvrD-like_C"/>
</dbReference>
<dbReference type="InterPro" id="IPR000212">
    <property type="entry name" value="DNA_helicase_UvrD/REP"/>
</dbReference>
<dbReference type="InterPro" id="IPR027417">
    <property type="entry name" value="P-loop_NTPase"/>
</dbReference>
<dbReference type="InterPro" id="IPR011604">
    <property type="entry name" value="PDDEXK-like_dom_sf"/>
</dbReference>
<dbReference type="InterPro" id="IPR038726">
    <property type="entry name" value="PDDEXK_AddAB-type"/>
</dbReference>
<dbReference type="InterPro" id="IPR011335">
    <property type="entry name" value="Restrct_endonuc-II-like"/>
</dbReference>
<dbReference type="InterPro" id="IPR014016">
    <property type="entry name" value="UvrD-like_ATP-bd"/>
</dbReference>
<dbReference type="NCBIfam" id="TIGR02785">
    <property type="entry name" value="addA_Gpos"/>
    <property type="match status" value="1"/>
</dbReference>
<dbReference type="PANTHER" id="PTHR11070:SF48">
    <property type="entry name" value="ATP-DEPENDENT HELICASE_NUCLEASE SUBUNIT A"/>
    <property type="match status" value="1"/>
</dbReference>
<dbReference type="PANTHER" id="PTHR11070">
    <property type="entry name" value="UVRD / RECB / PCRA DNA HELICASE FAMILY MEMBER"/>
    <property type="match status" value="1"/>
</dbReference>
<dbReference type="Pfam" id="PF12705">
    <property type="entry name" value="PDDEXK_1"/>
    <property type="match status" value="1"/>
</dbReference>
<dbReference type="Pfam" id="PF00580">
    <property type="entry name" value="UvrD-helicase"/>
    <property type="match status" value="1"/>
</dbReference>
<dbReference type="Pfam" id="PF13361">
    <property type="entry name" value="UvrD_C"/>
    <property type="match status" value="1"/>
</dbReference>
<dbReference type="SUPFAM" id="SSF52540">
    <property type="entry name" value="P-loop containing nucleoside triphosphate hydrolases"/>
    <property type="match status" value="1"/>
</dbReference>
<dbReference type="SUPFAM" id="SSF52980">
    <property type="entry name" value="Restriction endonuclease-like"/>
    <property type="match status" value="1"/>
</dbReference>
<dbReference type="PROSITE" id="PS51198">
    <property type="entry name" value="UVRD_HELICASE_ATP_BIND"/>
    <property type="match status" value="1"/>
</dbReference>
<dbReference type="PROSITE" id="PS51217">
    <property type="entry name" value="UVRD_HELICASE_CTER"/>
    <property type="match status" value="1"/>
</dbReference>
<evidence type="ECO:0000255" key="1">
    <source>
        <dbReference type="HAMAP-Rule" id="MF_01451"/>
    </source>
</evidence>
<protein>
    <recommendedName>
        <fullName evidence="1">ATP-dependent helicase/nuclease subunit A</fullName>
        <ecNumber evidence="1">3.1.-.-</ecNumber>
        <ecNumber evidence="1">5.6.2.4</ecNumber>
    </recommendedName>
    <alternativeName>
        <fullName evidence="1">ATP-dependent helicase/nuclease AddA</fullName>
    </alternativeName>
    <alternativeName>
        <fullName evidence="1">DNA 3'-5' helicase AddA</fullName>
    </alternativeName>
</protein>
<organism>
    <name type="scientific">Bacillus cereus (strain ZK / E33L)</name>
    <dbReference type="NCBI Taxonomy" id="288681"/>
    <lineage>
        <taxon>Bacteria</taxon>
        <taxon>Bacillati</taxon>
        <taxon>Bacillota</taxon>
        <taxon>Bacilli</taxon>
        <taxon>Bacillales</taxon>
        <taxon>Bacillaceae</taxon>
        <taxon>Bacillus</taxon>
        <taxon>Bacillus cereus group</taxon>
    </lineage>
</organism>
<name>ADDA_BACCZ</name>
<sequence length="1241" mass="142649">MMENWPKKPEGSQWTDDQWKAVVANGRDILVAAAAGSGKTAVLVERIIKKIINEENPVDVDRLLVVTFTNAAAQEMKNRIGEALEKVLIDEPGSQHVRKQLSLLNKASISTIHSFCLQVIRGYYYMLDVDPRFRIANQTENELLKEEVLDDILEEEYGIEDNTIFFELVDRYTSDRSDDDLQRMILALHTESRAHPNPEKWLDKLVEAYDVEGKTIEDLVYASYLLEDVKFQLETAEQHIRKATELAMLPDGPAPRVETLQADLALLGTLSSAARESWTSVYEAMQNVSWQTLKRIKKSDYNEDIVKQVDSLRNKAKDEVKKLQEELFSRRPESFLRDFQDMHPVLEKLVQLVKVFTGRFQAMKRDKGMVDFTDLEHFCLQILSEQSEDGEMKPSAVALQYRNKFAEVLVDEYQDTNFVQESIIKFVTKDSESEGNLFMVGDVKQSIYRFRLAEPGLFLGKYKRFTQEGLGGGMKIDLAKNFRSRHEVLAGTNFIFKQIMGEEVGEIDYDADAELKLGASYPEGEDVAAELLCIQQTEEEVIDGEEGAEVEKAQLEARLMAQRIKAMVDSGYEVYDRKTDSMRPVQYRDFVILLRSMPWAPQIMEELKLQGIPVYADLATGYFEATEVNIMMNVFRVIDNPMQDIPLAAVLRSPIVGLNDEELATLRAHGKKGSFYEVMSSFLKGAPLEEEKELHDKLEWFYNLLQGWREFARQQSLSDLIWKVYGETGYYDFVGGLPAGKQRQANLRVLYDRARQYEATSFRGLFRFLRFIERILERGDDMGTARALGEQEDVVRIMTIHKSKGLEFPVVFVAGLGRRFNTQDLMKRFLLHKDFGFGSQFIDPRKRIKYTTLSQLAIKRKMKMELIAEEMRVLYVALTRAKEKLILIGTVKDANKEMEKWLDAREHSEWLLPDHIRAGASCYLDWIAPSLYRHRDSEMLLELGQGSIPDEIYGYDTSWKVEVVDGNTLLAPEPVQEEKQELLEALREKKAVPLESERKEEVYDRLMWKYGYEEATSHRAKQSVTEIKRNYQSEEGSDNAFIKKLRAPIRTRPRFMEKKGLTYAERGTAVHAVMQHVDLKKPVTVEVLQEQIAGMVNKELLTFEQAEEIAIEKVISFFDSDLGKRVLAAKSVEREVPFTMMLAAEEAYQDWQGESGESILVQGVIDCMIEEEDGITLIDFKTDTIEGKFPGGFDQAKPILEVRYKVQLSLYAKALEKSLQHPVKEKCLYFFDGNHVIKVEE</sequence>
<accession>Q63EM2</accession>
<comment type="function">
    <text evidence="1">The heterodimer acts as both an ATP-dependent DNA helicase and an ATP-dependent, dual-direction single-stranded exonuclease. Recognizes the chi site generating a DNA molecule suitable for the initiation of homologous recombination. The AddA nuclease domain is required for chi fragment generation; this subunit has the helicase and 3' -&gt; 5' nuclease activities.</text>
</comment>
<comment type="catalytic activity">
    <reaction evidence="1">
        <text>Couples ATP hydrolysis with the unwinding of duplex DNA by translocating in the 3'-5' direction.</text>
        <dbReference type="EC" id="5.6.2.4"/>
    </reaction>
</comment>
<comment type="catalytic activity">
    <reaction evidence="1">
        <text>ATP + H2O = ADP + phosphate + H(+)</text>
        <dbReference type="Rhea" id="RHEA:13065"/>
        <dbReference type="ChEBI" id="CHEBI:15377"/>
        <dbReference type="ChEBI" id="CHEBI:15378"/>
        <dbReference type="ChEBI" id="CHEBI:30616"/>
        <dbReference type="ChEBI" id="CHEBI:43474"/>
        <dbReference type="ChEBI" id="CHEBI:456216"/>
        <dbReference type="EC" id="5.6.2.4"/>
    </reaction>
</comment>
<comment type="cofactor">
    <cofactor evidence="1">
        <name>Mg(2+)</name>
        <dbReference type="ChEBI" id="CHEBI:18420"/>
    </cofactor>
</comment>
<comment type="subunit">
    <text evidence="1">Heterodimer of AddA and AddB/RexB.</text>
</comment>
<comment type="similarity">
    <text evidence="1">Belongs to the helicase family. AddA subfamily.</text>
</comment>